<dbReference type="EMBL" id="M35214">
    <property type="protein sequence ID" value="AAA48384.1"/>
    <property type="molecule type" value="Genomic_RNA"/>
</dbReference>
<dbReference type="PDB" id="5I2M">
    <property type="method" value="X-ray"/>
    <property type="resolution" value="2.40 A"/>
    <property type="chains" value="A/B/C=17-438"/>
</dbReference>
<dbReference type="PDB" id="5I2S">
    <property type="method" value="X-ray"/>
    <property type="resolution" value="3.00 A"/>
    <property type="chains" value="A=17-438"/>
</dbReference>
<dbReference type="PDB" id="5OY9">
    <property type="method" value="X-ray"/>
    <property type="resolution" value="3.60 A"/>
    <property type="chains" value="A=17-426"/>
</dbReference>
<dbReference type="PDBsum" id="5I2M"/>
<dbReference type="PDBsum" id="5I2S"/>
<dbReference type="PDBsum" id="5OY9"/>
<dbReference type="TCDB" id="1.G.5.1.1">
    <property type="family name" value="the viral pore-forming membrane fusion protein-5 (vmfp5) family"/>
</dbReference>
<dbReference type="GlyCosmos" id="P0C2X0">
    <property type="glycosylation" value="2 sites, No reported glycans"/>
</dbReference>
<dbReference type="ABCD" id="P0C2X0">
    <property type="antibodies" value="14 sequenced antibodies"/>
</dbReference>
<dbReference type="EvolutionaryTrace" id="P0C2X0"/>
<dbReference type="GO" id="GO:0033644">
    <property type="term" value="C:host cell membrane"/>
    <property type="evidence" value="ECO:0007669"/>
    <property type="project" value="UniProtKB-SubCell"/>
</dbReference>
<dbReference type="GO" id="GO:0016020">
    <property type="term" value="C:membrane"/>
    <property type="evidence" value="ECO:0007669"/>
    <property type="project" value="UniProtKB-KW"/>
</dbReference>
<dbReference type="GO" id="GO:0019031">
    <property type="term" value="C:viral envelope"/>
    <property type="evidence" value="ECO:0007669"/>
    <property type="project" value="UniProtKB-KW"/>
</dbReference>
<dbReference type="GO" id="GO:0055036">
    <property type="term" value="C:virion membrane"/>
    <property type="evidence" value="ECO:0007669"/>
    <property type="project" value="UniProtKB-SubCell"/>
</dbReference>
<dbReference type="GO" id="GO:0075512">
    <property type="term" value="P:clathrin-dependent endocytosis of virus by host cell"/>
    <property type="evidence" value="ECO:0007669"/>
    <property type="project" value="UniProtKB-KW"/>
</dbReference>
<dbReference type="GO" id="GO:0098670">
    <property type="term" value="P:entry receptor-mediated virion attachment to host cell"/>
    <property type="evidence" value="ECO:0007669"/>
    <property type="project" value="UniProtKB-KW"/>
</dbReference>
<dbReference type="GO" id="GO:0039654">
    <property type="term" value="P:fusion of virus membrane with host endosome membrane"/>
    <property type="evidence" value="ECO:0007669"/>
    <property type="project" value="UniProtKB-KW"/>
</dbReference>
<dbReference type="Gene3D" id="2.30.29.130">
    <property type="match status" value="2"/>
</dbReference>
<dbReference type="Gene3D" id="2.30.30.640">
    <property type="match status" value="2"/>
</dbReference>
<dbReference type="InterPro" id="IPR055447">
    <property type="entry name" value="Rhabdo_glycop_CD"/>
</dbReference>
<dbReference type="InterPro" id="IPR001903">
    <property type="entry name" value="Rhabdo_glycop_FD"/>
</dbReference>
<dbReference type="Pfam" id="PF24833">
    <property type="entry name" value="Rhabdo_glycop_CD"/>
    <property type="match status" value="1"/>
</dbReference>
<dbReference type="Pfam" id="PF00974">
    <property type="entry name" value="Rhabdo_glycop_FD"/>
    <property type="match status" value="1"/>
</dbReference>
<dbReference type="SUPFAM" id="SSF161008">
    <property type="entry name" value="Viral glycoprotein ectodomain-like"/>
    <property type="match status" value="1"/>
</dbReference>
<accession>P0C2X0</accession>
<accession>Q88999</accession>
<gene>
    <name type="primary">G</name>
</gene>
<keyword id="KW-0002">3D-structure</keyword>
<keyword id="KW-1165">Clathrin-mediated endocytosis of virus by host</keyword>
<keyword id="KW-1015">Disulfide bond</keyword>
<keyword id="KW-1170">Fusion of virus membrane with host endosomal membrane</keyword>
<keyword id="KW-1168">Fusion of virus membrane with host membrane</keyword>
<keyword id="KW-0325">Glycoprotein</keyword>
<keyword id="KW-1043">Host membrane</keyword>
<keyword id="KW-0945">Host-virus interaction</keyword>
<keyword id="KW-0449">Lipoprotein</keyword>
<keyword id="KW-0472">Membrane</keyword>
<keyword id="KW-0488">Methylation</keyword>
<keyword id="KW-0564">Palmitate</keyword>
<keyword id="KW-0732">Signal</keyword>
<keyword id="KW-0812">Transmembrane</keyword>
<keyword id="KW-1133">Transmembrane helix</keyword>
<keyword id="KW-1161">Viral attachment to host cell</keyword>
<keyword id="KW-1234">Viral attachment to host entry receptor</keyword>
<keyword id="KW-0261">Viral envelope protein</keyword>
<keyword id="KW-1162">Viral penetration into host cytoplasm</keyword>
<keyword id="KW-0946">Virion</keyword>
<keyword id="KW-1164">Virus endocytosis by host</keyword>
<keyword id="KW-1160">Virus entry into host cell</keyword>
<organism>
    <name type="scientific">Vesicular stomatitis Indiana virus (strain Mudd-Summers)</name>
    <name type="common">VSIV</name>
    <dbReference type="NCBI Taxonomy" id="11279"/>
    <lineage>
        <taxon>Viruses</taxon>
        <taxon>Riboviria</taxon>
        <taxon>Orthornavirae</taxon>
        <taxon>Negarnaviricota</taxon>
        <taxon>Haploviricotina</taxon>
        <taxon>Monjiviricetes</taxon>
        <taxon>Mononegavirales</taxon>
        <taxon>Rhabdoviridae</taxon>
        <taxon>Alpharhabdovirinae</taxon>
        <taxon>Vesiculovirus</taxon>
        <taxon>Vesiculovirus indiana</taxon>
    </lineage>
</organism>
<reference key="1">
    <citation type="journal article" date="1990" name="J. Virol.">
        <title>Polymerase errors accumulating during natural evolution of the glycoprotein gene of vesicular stomatitis virus Indiana serotype isolates.</title>
        <authorList>
            <person name="Bilsel P.A."/>
            <person name="Nichol S.T."/>
        </authorList>
    </citation>
    <scope>NUCLEOTIDE SEQUENCE [GENOMIC RNA]</scope>
    <source>
        <strain>Mudd-Summers</strain>
    </source>
</reference>
<reference evidence="8" key="2">
    <citation type="journal article" date="2006" name="Science">
        <title>Crystal structure of the low-pH form of the vesicular stomatitis virus glycoprotein G.</title>
        <authorList>
            <person name="Roche S."/>
            <person name="Bressanelli S."/>
            <person name="Rey F.A."/>
            <person name="Gaudin Y."/>
        </authorList>
    </citation>
    <scope>X-RAY CRYSTALLOGRAPHY (2.4 ANGSTROMS) OF 17-439</scope>
    <scope>SUBUNIT</scope>
    <scope>DISULFIDE BONDS</scope>
    <scope>FUNCTION</scope>
</reference>
<reference evidence="9" key="3">
    <citation type="journal article" date="2007" name="Science">
        <title>Structure of the prefusion form of the vesicular stomatitis virus glycoprotein G.</title>
        <authorList>
            <person name="Roche S."/>
            <person name="Rey F.A."/>
            <person name="Gaudin Y."/>
            <person name="Bressanelli S."/>
        </authorList>
    </citation>
    <scope>X-RAY CRYSTALLOGRAPHY (3.00 ANGSTROMS) OF 17-438</scope>
    <scope>GLYCOSYLATION AT ASN-179 AND ASN-336</scope>
    <scope>DISULFIDE BONDS</scope>
    <scope>FUNCTION</scope>
    <scope>SUBUNIT</scope>
</reference>
<reference evidence="10" key="4">
    <citation type="journal article" date="2018" name="Nat. Commun.">
        <title>Structural basis for the recognition of LDL-receptor family members by VSV glycoprotein.</title>
        <authorList>
            <person name="Nikolic J."/>
            <person name="Belot L."/>
            <person name="Raux H."/>
            <person name="Legrand P."/>
            <person name="Gaudin Y."/>
            <person name="Albertini A.A."/>
        </authorList>
    </citation>
    <scope>X-RAY CRYSTALLOGRAPHY (3.60 ANGSTROMS) OF 17-426</scope>
    <scope>METHYLATION AT LYS-66</scope>
    <scope>GLYCOSYLATION AT ASN-336</scope>
    <scope>DISULFIDE BONDS</scope>
    <scope>FUNCTION</scope>
    <scope>INTERACTION WITH HOST LDL RECEPTOR</scope>
    <scope>MUTAGENESIS OF LYS-63 AND ARG-370</scope>
</reference>
<organismHost>
    <name type="scientific">Aedes</name>
    <dbReference type="NCBI Taxonomy" id="7158"/>
</organismHost>
<organismHost>
    <name type="scientific">Bos taurus</name>
    <name type="common">Bovine</name>
    <dbReference type="NCBI Taxonomy" id="9913"/>
</organismHost>
<organismHost>
    <name type="scientific">Culicoides</name>
    <dbReference type="NCBI Taxonomy" id="58271"/>
</organismHost>
<organismHost>
    <name type="scientific">Equus asinus</name>
    <name type="common">Donkey</name>
    <name type="synonym">Equus africanus asinus</name>
    <dbReference type="NCBI Taxonomy" id="9793"/>
</organismHost>
<organismHost>
    <name type="scientific">Equus caballus</name>
    <name type="common">Horse</name>
    <dbReference type="NCBI Taxonomy" id="9796"/>
</organismHost>
<organismHost>
    <name type="scientific">Homo sapiens</name>
    <name type="common">Human</name>
    <dbReference type="NCBI Taxonomy" id="9606"/>
</organismHost>
<organismHost>
    <name type="scientific">Lutzomyia</name>
    <dbReference type="NCBI Taxonomy" id="252607"/>
</organismHost>
<organismHost>
    <name type="scientific">Musca domestica</name>
    <name type="common">House fly</name>
    <dbReference type="NCBI Taxonomy" id="7370"/>
</organismHost>
<organismHost>
    <name type="scientific">Simuliidae</name>
    <name type="common">black flies</name>
    <dbReference type="NCBI Taxonomy" id="7190"/>
</organismHost>
<organismHost>
    <name type="scientific">Sus scrofa</name>
    <name type="common">Pig</name>
    <dbReference type="NCBI Taxonomy" id="9823"/>
</organismHost>
<sequence length="511" mass="57360">MKCLLYLAFLFIGVNCKFTIVFPHNQKGNWKNVPSNYHYCPSSSDLNWHNDLVGTALQVKMPKSHKAIQADGWMCHASKWVTTCDFRWYGPKYITHSIRSFTPSVEQCKESIEQTKQGTWLNPGFPPQSCGYATVTDAEAAIVQVTPHHVLVDEYTGEWVDSQFINGKCSNDICPTVHNSTTWHSDYKVKGLCDSNLISMDITFFSEDGELSSLGKKGTGFRSNYFAYETGDKACKMQYCKHWGVRLPSGVWFEMADKDLFAAARFPECPEGSSISAPSQTSVDVSLIQDVERILDYSLCQETWSKIRAGLPISPVDLSYLAPKNPGTGPVFTIINGTLKYFETRYIRVDIAAPILSRMVGMISGTTTERVLWDDWAPYEDVGIGPNGVLRTSSGYKFPLYMIGHGMLDSDLHLSSKAQVFEHPHIQDAASQLPDGETLFFGDTGLSKNPIEFVEGWFSSWKSSIASFFFTIGLIIGLFLVLRVGIYLCIKLKHTKKRQIYTDIEMNRLGT</sequence>
<name>GLYCO_VSIVM</name>
<feature type="signal peptide" evidence="3">
    <location>
        <begin position="1"/>
        <end position="16"/>
    </location>
</feature>
<feature type="chain" id="PRO_0000287253" description="Glycoprotein G" evidence="3">
    <location>
        <begin position="17"/>
        <end position="511"/>
    </location>
</feature>
<feature type="topological domain" description="Virion surface" evidence="3">
    <location>
        <begin position="17"/>
        <end position="467"/>
    </location>
</feature>
<feature type="transmembrane region" description="Helical" evidence="3">
    <location>
        <begin position="468"/>
        <end position="488"/>
    </location>
</feature>
<feature type="topological domain" description="Intravirion" evidence="3">
    <location>
        <begin position="489"/>
        <end position="511"/>
    </location>
</feature>
<feature type="region of interest" description="Trimerization" evidence="5">
    <location>
        <begin position="18"/>
        <end position="35"/>
    </location>
</feature>
<feature type="region of interest" description="Fusion peptide" evidence="5">
    <location>
        <begin position="53"/>
        <end position="172"/>
    </location>
</feature>
<feature type="region of interest" description="Trimerization" evidence="5">
    <location>
        <begin position="259"/>
        <end position="309"/>
    </location>
</feature>
<feature type="region of interest" description="Trimerization" evidence="5">
    <location>
        <begin position="383"/>
        <end position="405"/>
    </location>
</feature>
<feature type="site" description="Involved in the interaction with host LDL receptor">
    <location>
        <position position="63"/>
    </location>
</feature>
<feature type="site" description="pH sensor in the pre-fusion state" evidence="5">
    <location>
        <position position="76"/>
    </location>
</feature>
<feature type="site" description="pH sensor in the pre-fusion state" evidence="5">
    <location>
        <position position="178"/>
    </location>
</feature>
<feature type="site" description="Involved in the interaction with host LDL receptor">
    <location>
        <position position="370"/>
    </location>
</feature>
<feature type="site" description="pH sensor in the pre-fusion state" evidence="5">
    <location>
        <position position="423"/>
    </location>
</feature>
<feature type="modified residue" description="N6-methyllysine; by host" evidence="10">
    <location>
        <position position="66"/>
    </location>
</feature>
<feature type="lipid moiety-binding region" description="S-palmitoyl cysteine; by host" evidence="2">
    <location>
        <position position="489"/>
    </location>
</feature>
<feature type="glycosylation site" description="N-linked (GlcNAc...) asparagine; by host" evidence="5 9">
    <location>
        <position position="179"/>
    </location>
</feature>
<feature type="glycosylation site" description="N-linked (GlcNAc...) asparagine; by host" evidence="5 6 9 10">
    <location>
        <position position="336"/>
    </location>
</feature>
<feature type="disulfide bond" evidence="4 5 6 8 9 10">
    <location>
        <begin position="40"/>
        <end position="300"/>
    </location>
</feature>
<feature type="disulfide bond" evidence="4 5 6 8 9 10">
    <location>
        <begin position="75"/>
        <end position="108"/>
    </location>
</feature>
<feature type="disulfide bond" evidence="4 5 6 8 9 10">
    <location>
        <begin position="84"/>
        <end position="130"/>
    </location>
</feature>
<feature type="disulfide bond" evidence="4 5 6 8 9 10">
    <location>
        <begin position="169"/>
        <end position="174"/>
    </location>
</feature>
<feature type="disulfide bond" evidence="4 5 6 8 9 10">
    <location>
        <begin position="193"/>
        <end position="240"/>
    </location>
</feature>
<feature type="disulfide bond" evidence="4 5 6 8 9 10">
    <location>
        <begin position="235"/>
        <end position="269"/>
    </location>
</feature>
<feature type="mutagenesis site" description="Drastic loss of interaction with host LDL receptor." evidence="6">
    <original>K</original>
    <variation>A</variation>
    <location>
        <position position="63"/>
    </location>
</feature>
<feature type="mutagenesis site" description="Drastic loss of interaction with host LDL receptor." evidence="6">
    <original>R</original>
    <variation>A</variation>
    <location>
        <position position="370"/>
    </location>
</feature>
<feature type="strand" evidence="11">
    <location>
        <begin position="18"/>
        <end position="23"/>
    </location>
</feature>
<feature type="helix" evidence="11">
    <location>
        <begin position="41"/>
        <end position="44"/>
    </location>
</feature>
<feature type="turn" evidence="11">
    <location>
        <begin position="46"/>
        <end position="48"/>
    </location>
</feature>
<feature type="strand" evidence="11">
    <location>
        <begin position="53"/>
        <end position="62"/>
    </location>
</feature>
<feature type="turn" evidence="12">
    <location>
        <begin position="64"/>
        <end position="67"/>
    </location>
</feature>
<feature type="strand" evidence="11">
    <location>
        <begin position="72"/>
        <end position="86"/>
    </location>
</feature>
<feature type="strand" evidence="11">
    <location>
        <begin position="92"/>
        <end position="101"/>
    </location>
</feature>
<feature type="helix" evidence="11">
    <location>
        <begin position="105"/>
        <end position="116"/>
    </location>
</feature>
<feature type="strand" evidence="11">
    <location>
        <begin position="134"/>
        <end position="147"/>
    </location>
</feature>
<feature type="strand" evidence="11">
    <location>
        <begin position="150"/>
        <end position="152"/>
    </location>
</feature>
<feature type="turn" evidence="11">
    <location>
        <begin position="154"/>
        <end position="156"/>
    </location>
</feature>
<feature type="helix" evidence="11">
    <location>
        <begin position="165"/>
        <end position="167"/>
    </location>
</feature>
<feature type="strand" evidence="11">
    <location>
        <begin position="171"/>
        <end position="178"/>
    </location>
</feature>
<feature type="strand" evidence="11">
    <location>
        <begin position="181"/>
        <end position="187"/>
    </location>
</feature>
<feature type="helix" evidence="11">
    <location>
        <begin position="189"/>
        <end position="194"/>
    </location>
</feature>
<feature type="strand" evidence="11">
    <location>
        <begin position="197"/>
        <end position="208"/>
    </location>
</feature>
<feature type="helix" evidence="11">
    <location>
        <begin position="211"/>
        <end position="213"/>
    </location>
</feature>
<feature type="strand" evidence="12">
    <location>
        <begin position="216"/>
        <end position="218"/>
    </location>
</feature>
<feature type="strand" evidence="11">
    <location>
        <begin position="220"/>
        <end position="223"/>
    </location>
</feature>
<feature type="strand" evidence="11">
    <location>
        <begin position="226"/>
        <end position="230"/>
    </location>
</feature>
<feature type="strand" evidence="11">
    <location>
        <begin position="235"/>
        <end position="239"/>
    </location>
</feature>
<feature type="strand" evidence="11">
    <location>
        <begin position="242"/>
        <end position="246"/>
    </location>
</feature>
<feature type="strand" evidence="11">
    <location>
        <begin position="252"/>
        <end position="256"/>
    </location>
</feature>
<feature type="helix" evidence="11">
    <location>
        <begin position="258"/>
        <end position="264"/>
    </location>
</feature>
<feature type="helix" evidence="11">
    <location>
        <begin position="280"/>
        <end position="309"/>
    </location>
</feature>
<feature type="helix" evidence="11">
    <location>
        <begin position="315"/>
        <end position="321"/>
    </location>
</feature>
<feature type="strand" evidence="11">
    <location>
        <begin position="325"/>
        <end position="335"/>
    </location>
</feature>
<feature type="strand" evidence="11">
    <location>
        <begin position="338"/>
        <end position="363"/>
    </location>
</feature>
<feature type="strand" evidence="11">
    <location>
        <begin position="369"/>
        <end position="371"/>
    </location>
</feature>
<feature type="strand" evidence="11">
    <location>
        <begin position="377"/>
        <end position="379"/>
    </location>
</feature>
<feature type="strand" evidence="11">
    <location>
        <begin position="382"/>
        <end position="384"/>
    </location>
</feature>
<feature type="helix" evidence="11">
    <location>
        <begin position="386"/>
        <end position="388"/>
    </location>
</feature>
<feature type="strand" evidence="11">
    <location>
        <begin position="390"/>
        <end position="392"/>
    </location>
</feature>
<feature type="strand" evidence="11">
    <location>
        <begin position="395"/>
        <end position="397"/>
    </location>
</feature>
<feature type="helix" evidence="11">
    <location>
        <begin position="400"/>
        <end position="415"/>
    </location>
</feature>
<feature type="turn" evidence="12">
    <location>
        <begin position="424"/>
        <end position="428"/>
    </location>
</feature>
<protein>
    <recommendedName>
        <fullName>Glycoprotein G</fullName>
    </recommendedName>
</protein>
<evidence type="ECO:0000250" key="1">
    <source>
        <dbReference type="UniProtKB" id="P03522"/>
    </source>
</evidence>
<evidence type="ECO:0000250" key="2">
    <source>
        <dbReference type="UniProtKB" id="P04884"/>
    </source>
</evidence>
<evidence type="ECO:0000255" key="3"/>
<evidence type="ECO:0000269" key="4">
    <source>
    </source>
</evidence>
<evidence type="ECO:0000269" key="5">
    <source>
    </source>
</evidence>
<evidence type="ECO:0000269" key="6">
    <source>
    </source>
</evidence>
<evidence type="ECO:0000305" key="7"/>
<evidence type="ECO:0007744" key="8">
    <source>
        <dbReference type="PDB" id="5I2M"/>
    </source>
</evidence>
<evidence type="ECO:0007744" key="9">
    <source>
        <dbReference type="PDB" id="5I2S"/>
    </source>
</evidence>
<evidence type="ECO:0007744" key="10">
    <source>
        <dbReference type="PDB" id="5OY9"/>
    </source>
</evidence>
<evidence type="ECO:0007829" key="11">
    <source>
        <dbReference type="PDB" id="5I2M"/>
    </source>
</evidence>
<evidence type="ECO:0007829" key="12">
    <source>
        <dbReference type="PDB" id="5I2S"/>
    </source>
</evidence>
<proteinExistence type="evidence at protein level"/>
<comment type="function">
    <text evidence="4 5 6">Attaches the virus to host LDL receptors, inducing clathrin-dependent endocytosis of the virion (PubMed:29531262). In the endosome, the acidic pH induces conformational changes in the glycoprotein trimer, which trigger fusion between virus and endosomal membrane (PubMed:16840692, PubMed:17289996).</text>
</comment>
<comment type="subunit">
    <text evidence="4 5 6">Homotrimer (PubMed:16840692, PubMed:17289996). Interacts with host LDL at target cell surface (via CR2 and CR3 domains) (PubMed:29531262).</text>
</comment>
<comment type="subcellular location">
    <subcellularLocation>
        <location evidence="1">Virion membrane</location>
        <topology evidence="1">Single-pass type I membrane protein</topology>
    </subcellularLocation>
    <subcellularLocation>
        <location evidence="1">Host membrane</location>
        <topology evidence="1">Single-pass type I membrane protein</topology>
    </subcellularLocation>
</comment>
<comment type="PTM">
    <text evidence="1">Glycosylated by host. Palmitoylated by host.</text>
</comment>
<comment type="similarity">
    <text evidence="7">Belongs to the vesiculovirus glycoprotein family.</text>
</comment>